<reference key="1">
    <citation type="journal article" date="2009" name="PLoS Biol.">
        <title>Lineage-specific biology revealed by a finished genome assembly of the mouse.</title>
        <authorList>
            <person name="Church D.M."/>
            <person name="Goodstadt L."/>
            <person name="Hillier L.W."/>
            <person name="Zody M.C."/>
            <person name="Goldstein S."/>
            <person name="She X."/>
            <person name="Bult C.J."/>
            <person name="Agarwala R."/>
            <person name="Cherry J.L."/>
            <person name="DiCuccio M."/>
            <person name="Hlavina W."/>
            <person name="Kapustin Y."/>
            <person name="Meric P."/>
            <person name="Maglott D."/>
            <person name="Birtle Z."/>
            <person name="Marques A.C."/>
            <person name="Graves T."/>
            <person name="Zhou S."/>
            <person name="Teague B."/>
            <person name="Potamousis K."/>
            <person name="Churas C."/>
            <person name="Place M."/>
            <person name="Herschleb J."/>
            <person name="Runnheim R."/>
            <person name="Forrest D."/>
            <person name="Amos-Landgraf J."/>
            <person name="Schwartz D.C."/>
            <person name="Cheng Z."/>
            <person name="Lindblad-Toh K."/>
            <person name="Eichler E.E."/>
            <person name="Ponting C.P."/>
        </authorList>
    </citation>
    <scope>NUCLEOTIDE SEQUENCE [LARGE SCALE GENOMIC DNA]</scope>
    <source>
        <strain>C57BL/6J</strain>
    </source>
</reference>
<reference key="2">
    <citation type="journal article" date="2004" name="Genome Res.">
        <title>The status, quality, and expansion of the NIH full-length cDNA project: the Mammalian Gene Collection (MGC).</title>
        <authorList>
            <consortium name="The MGC Project Team"/>
        </authorList>
    </citation>
    <scope>NUCLEOTIDE SEQUENCE [LARGE SCALE MRNA]</scope>
    <source>
        <strain>FVB/N</strain>
        <tissue>Mammary tumor</tissue>
    </source>
</reference>
<reference key="3">
    <citation type="journal article" date="2003" name="FEBS Lett.">
        <title>Differential expression of ATPAF1 and ATPAF2 genes encoding F(1)-ATPase assembly proteins in mouse tissues.</title>
        <authorList>
            <person name="Pickova A."/>
            <person name="Paul J."/>
            <person name="Petruzzella V."/>
            <person name="Houstek J."/>
        </authorList>
    </citation>
    <scope>TISSUE SPECIFICITY</scope>
</reference>
<reference key="4">
    <citation type="journal article" date="2010" name="Cell">
        <title>A tissue-specific atlas of mouse protein phosphorylation and expression.</title>
        <authorList>
            <person name="Huttlin E.L."/>
            <person name="Jedrychowski M.P."/>
            <person name="Elias J.E."/>
            <person name="Goswami T."/>
            <person name="Rad R."/>
            <person name="Beausoleil S.A."/>
            <person name="Villen J."/>
            <person name="Haas W."/>
            <person name="Sowa M.E."/>
            <person name="Gygi S.P."/>
        </authorList>
    </citation>
    <scope>IDENTIFICATION BY MASS SPECTROMETRY [LARGE SCALE ANALYSIS]</scope>
    <source>
        <tissue>Brain</tissue>
        <tissue>Brown adipose tissue</tissue>
        <tissue>Heart</tissue>
        <tissue>Kidney</tissue>
        <tissue>Lung</tissue>
        <tissue>Spleen</tissue>
    </source>
</reference>
<reference key="5">
    <citation type="journal article" date="2021" name="Mitochondrion">
        <title>ATPAF1 deficiency impairs ATP synthase assembly and mitochondrial respiration.</title>
        <authorList>
            <person name="Zhou Z."/>
            <person name="Zhang K."/>
            <person name="Liu Z."/>
            <person name="Gao X."/>
            <person name="Huang K."/>
            <person name="Chen C."/>
            <person name="Wang D."/>
            <person name="Yang Q."/>
            <person name="Long Q."/>
        </authorList>
    </citation>
    <scope>FUNCTION</scope>
    <scope>INTERACTION WITH ATP5F1B</scope>
    <scope>SUBCELLULAR LOCATION</scope>
    <scope>DISRUPTION PHENOTYPE</scope>
</reference>
<dbReference type="EMBL" id="AL626806">
    <property type="status" value="NOT_ANNOTATED_CDS"/>
    <property type="molecule type" value="Genomic_DNA"/>
</dbReference>
<dbReference type="EMBL" id="BC044874">
    <property type="protein sequence ID" value="AAH44874.1"/>
    <property type="molecule type" value="mRNA"/>
</dbReference>
<dbReference type="CCDS" id="CCDS89811.1"/>
<dbReference type="RefSeq" id="NP_001356162.1">
    <property type="nucleotide sequence ID" value="NM_001369233.1"/>
</dbReference>
<dbReference type="SMR" id="Q811I0"/>
<dbReference type="FunCoup" id="Q811I0">
    <property type="interactions" value="1784"/>
</dbReference>
<dbReference type="STRING" id="10090.ENSMUSP00000135831"/>
<dbReference type="GlyGen" id="Q811I0">
    <property type="glycosylation" value="1 site, 1 O-linked glycan (1 site)"/>
</dbReference>
<dbReference type="iPTMnet" id="Q811I0"/>
<dbReference type="PhosphoSitePlus" id="Q811I0"/>
<dbReference type="SwissPalm" id="Q811I0"/>
<dbReference type="jPOST" id="Q811I0"/>
<dbReference type="PaxDb" id="10090-ENSMUSP00000135831"/>
<dbReference type="ProteomicsDB" id="277218"/>
<dbReference type="Pumba" id="Q811I0"/>
<dbReference type="Antibodypedia" id="32819">
    <property type="antibodies" value="87 antibodies from 18 providers"/>
</dbReference>
<dbReference type="Ensembl" id="ENSMUST00000239030.2">
    <property type="protein sequence ID" value="ENSMUSP00000158943.2"/>
    <property type="gene ID" value="ENSMUSG00000028710.19"/>
</dbReference>
<dbReference type="GeneID" id="230649"/>
<dbReference type="AGR" id="MGI:2180560"/>
<dbReference type="MGI" id="MGI:2180560">
    <property type="gene designation" value="Atpaf1"/>
</dbReference>
<dbReference type="VEuPathDB" id="HostDB:ENSMUSG00000028710"/>
<dbReference type="eggNOG" id="KOG3281">
    <property type="taxonomic scope" value="Eukaryota"/>
</dbReference>
<dbReference type="GeneTree" id="ENSGT00390000012765"/>
<dbReference type="InParanoid" id="Q811I0"/>
<dbReference type="PhylomeDB" id="Q811I0"/>
<dbReference type="ChiTaRS" id="Atpaf1">
    <property type="organism name" value="mouse"/>
</dbReference>
<dbReference type="PRO" id="PR:Q811I0"/>
<dbReference type="Proteomes" id="UP000000589">
    <property type="component" value="Chromosome 4"/>
</dbReference>
<dbReference type="RNAct" id="Q811I0">
    <property type="molecule type" value="protein"/>
</dbReference>
<dbReference type="Bgee" id="ENSMUSG00000028710">
    <property type="expression patterns" value="Expressed in facial nucleus and 224 other cell types or tissues"/>
</dbReference>
<dbReference type="ExpressionAtlas" id="Q811I0">
    <property type="expression patterns" value="baseline and differential"/>
</dbReference>
<dbReference type="GO" id="GO:0005743">
    <property type="term" value="C:mitochondrial inner membrane"/>
    <property type="evidence" value="ECO:0000314"/>
    <property type="project" value="UniProtKB"/>
</dbReference>
<dbReference type="GO" id="GO:0005739">
    <property type="term" value="C:mitochondrion"/>
    <property type="evidence" value="ECO:0007005"/>
    <property type="project" value="MGI"/>
</dbReference>
<dbReference type="GO" id="GO:0140777">
    <property type="term" value="F:protein-containing complex stabilizing activity"/>
    <property type="evidence" value="ECO:0000315"/>
    <property type="project" value="UniProtKB"/>
</dbReference>
<dbReference type="GO" id="GO:0033615">
    <property type="term" value="P:mitochondrial proton-transporting ATP synthase complex assembly"/>
    <property type="evidence" value="ECO:0000315"/>
    <property type="project" value="UniProtKB"/>
</dbReference>
<dbReference type="InterPro" id="IPR010591">
    <property type="entry name" value="ATP11"/>
</dbReference>
<dbReference type="PANTHER" id="PTHR13126:SF0">
    <property type="entry name" value="ATP SYNTHASE MITOCHONDRIAL F1 COMPLEX ASSEMBLY FACTOR 1"/>
    <property type="match status" value="1"/>
</dbReference>
<dbReference type="PANTHER" id="PTHR13126">
    <property type="entry name" value="CHAPERONE ATP11"/>
    <property type="match status" value="1"/>
</dbReference>
<dbReference type="Pfam" id="PF06644">
    <property type="entry name" value="ATP11"/>
    <property type="match status" value="1"/>
</dbReference>
<accession>Q811I0</accession>
<sequence length="324" mass="36355">MAAVVSAAGGACPAVLQVAGLYRGLCAVRSRALGLGFVSPAQLRVFPVRRGSGLPPEGADGSGVSELEANPFYDRYRDKIQQLRRSDPAAFESRLEKRSEFRKQPVGHSKQSDFIKCMEQKTDALGKQPVSKGFTKDKTLSSVFNVEMVKDKTAEEIKQIWQQYFSAKDTVYAVIPKEKFDLIWNRAQSCPTFLCALPRRDGYEFFVGQWTGTELHFTALINIQTRGDAAASQLILYHYPELKEEKGIVLMTAEMDSTFLNVVEAQCIANQVQLFYATDRKEIYGLVETFNFRPNEFKYMSVIAELEQSGLGAELKRAQNQDKT</sequence>
<evidence type="ECO:0000255" key="1"/>
<evidence type="ECO:0000269" key="2">
    <source>
    </source>
</evidence>
<evidence type="ECO:0000269" key="3">
    <source>
    </source>
</evidence>
<evidence type="ECO:0000305" key="4"/>
<evidence type="ECO:0000305" key="5">
    <source>
    </source>
</evidence>
<evidence type="ECO:0000312" key="6">
    <source>
        <dbReference type="MGI" id="MGI:2180560"/>
    </source>
</evidence>
<organism>
    <name type="scientific">Mus musculus</name>
    <name type="common">Mouse</name>
    <dbReference type="NCBI Taxonomy" id="10090"/>
    <lineage>
        <taxon>Eukaryota</taxon>
        <taxon>Metazoa</taxon>
        <taxon>Chordata</taxon>
        <taxon>Craniata</taxon>
        <taxon>Vertebrata</taxon>
        <taxon>Euteleostomi</taxon>
        <taxon>Mammalia</taxon>
        <taxon>Eutheria</taxon>
        <taxon>Euarchontoglires</taxon>
        <taxon>Glires</taxon>
        <taxon>Rodentia</taxon>
        <taxon>Myomorpha</taxon>
        <taxon>Muroidea</taxon>
        <taxon>Muridae</taxon>
        <taxon>Murinae</taxon>
        <taxon>Mus</taxon>
        <taxon>Mus</taxon>
    </lineage>
</organism>
<name>ATPF1_MOUSE</name>
<proteinExistence type="evidence at protein level"/>
<protein>
    <recommendedName>
        <fullName evidence="5">ATP synthase mitochondrial F1 complex assembly factor 1</fullName>
    </recommendedName>
</protein>
<keyword id="KW-0472">Membrane</keyword>
<keyword id="KW-0496">Mitochondrion</keyword>
<keyword id="KW-0999">Mitochondrion inner membrane</keyword>
<keyword id="KW-1185">Reference proteome</keyword>
<keyword id="KW-0809">Transit peptide</keyword>
<comment type="function">
    <text evidence="3">Has a complex stabilizing activity in the assembly of the mitochondrial F1-F0 complex.</text>
</comment>
<comment type="subunit">
    <text evidence="3">Interacts with ATP5F1B; involved in the assembly of the F1 component of the mitochondrial ATP synthase (ATPase).</text>
</comment>
<comment type="subcellular location">
    <subcellularLocation>
        <location evidence="3">Mitochondrion inner membrane</location>
        <topology evidence="5">Peripheral membrane protein</topology>
    </subcellularLocation>
</comment>
<comment type="tissue specificity">
    <text evidence="2">Widely expressed but with low level.</text>
</comment>
<comment type="disruption phenotype">
    <text evidence="3">Mice lacking Atpaf1 are viable. Though it is not essential for embryonic development, its deficiency leads to growth retardation and lactatemia respectively in young and adult mice.</text>
</comment>
<comment type="similarity">
    <text evidence="4">Belongs to the ATP11 family.</text>
</comment>
<gene>
    <name evidence="6" type="primary">Atpaf1</name>
</gene>
<feature type="transit peptide" description="Mitochondrion" evidence="1">
    <location>
        <begin position="1"/>
        <end position="54"/>
    </location>
</feature>
<feature type="chain" id="PRO_0000318916" description="ATP synthase mitochondrial F1 complex assembly factor 1">
    <location>
        <begin position="55"/>
        <end position="324"/>
    </location>
</feature>